<dbReference type="EC" id="3.5.1.110" evidence="1"/>
<dbReference type="EMBL" id="CP000800">
    <property type="protein sequence ID" value="ABV20449.1"/>
    <property type="molecule type" value="Genomic_DNA"/>
</dbReference>
<dbReference type="SMR" id="A7ZKB6"/>
<dbReference type="KEGG" id="ecw:EcE24377A_1129"/>
<dbReference type="HOGENOM" id="CLU_068979_8_0_6"/>
<dbReference type="Proteomes" id="UP000001122">
    <property type="component" value="Chromosome"/>
</dbReference>
<dbReference type="GO" id="GO:0016811">
    <property type="term" value="F:hydrolase activity, acting on carbon-nitrogen (but not peptide) bonds, in linear amides"/>
    <property type="evidence" value="ECO:0007669"/>
    <property type="project" value="UniProtKB-UniRule"/>
</dbReference>
<dbReference type="GO" id="GO:0019740">
    <property type="term" value="P:nitrogen utilization"/>
    <property type="evidence" value="ECO:0007669"/>
    <property type="project" value="UniProtKB-UniRule"/>
</dbReference>
<dbReference type="GO" id="GO:0006212">
    <property type="term" value="P:uracil catabolic process"/>
    <property type="evidence" value="ECO:0007669"/>
    <property type="project" value="UniProtKB-UniRule"/>
</dbReference>
<dbReference type="CDD" id="cd00431">
    <property type="entry name" value="cysteine_hydrolases"/>
    <property type="match status" value="1"/>
</dbReference>
<dbReference type="FunFam" id="3.40.50.850:FF:000004">
    <property type="entry name" value="Peroxyureidoacrylate/ureidoacrylate amidohydrolase RutB"/>
    <property type="match status" value="1"/>
</dbReference>
<dbReference type="Gene3D" id="3.40.50.850">
    <property type="entry name" value="Isochorismatase-like"/>
    <property type="match status" value="1"/>
</dbReference>
<dbReference type="HAMAP" id="MF_00830">
    <property type="entry name" value="RutB"/>
    <property type="match status" value="1"/>
</dbReference>
<dbReference type="InterPro" id="IPR000868">
    <property type="entry name" value="Isochorismatase-like_dom"/>
</dbReference>
<dbReference type="InterPro" id="IPR050272">
    <property type="entry name" value="Isochorismatase-like_hydrls"/>
</dbReference>
<dbReference type="InterPro" id="IPR036380">
    <property type="entry name" value="Isochorismatase-like_sf"/>
</dbReference>
<dbReference type="InterPro" id="IPR019916">
    <property type="entry name" value="RutB"/>
</dbReference>
<dbReference type="NCBIfam" id="TIGR03614">
    <property type="entry name" value="RutB"/>
    <property type="match status" value="1"/>
</dbReference>
<dbReference type="PANTHER" id="PTHR43540:SF6">
    <property type="entry name" value="ISOCHORISMATASE-LIKE DOMAIN-CONTAINING PROTEIN"/>
    <property type="match status" value="1"/>
</dbReference>
<dbReference type="PANTHER" id="PTHR43540">
    <property type="entry name" value="PEROXYUREIDOACRYLATE/UREIDOACRYLATE AMIDOHYDROLASE-RELATED"/>
    <property type="match status" value="1"/>
</dbReference>
<dbReference type="Pfam" id="PF00857">
    <property type="entry name" value="Isochorismatase"/>
    <property type="match status" value="1"/>
</dbReference>
<dbReference type="SUPFAM" id="SSF52499">
    <property type="entry name" value="Isochorismatase-like hydrolases"/>
    <property type="match status" value="1"/>
</dbReference>
<organism>
    <name type="scientific">Escherichia coli O139:H28 (strain E24377A / ETEC)</name>
    <dbReference type="NCBI Taxonomy" id="331111"/>
    <lineage>
        <taxon>Bacteria</taxon>
        <taxon>Pseudomonadati</taxon>
        <taxon>Pseudomonadota</taxon>
        <taxon>Gammaproteobacteria</taxon>
        <taxon>Enterobacterales</taxon>
        <taxon>Enterobacteriaceae</taxon>
        <taxon>Escherichia</taxon>
    </lineage>
</organism>
<proteinExistence type="inferred from homology"/>
<name>RUTB_ECO24</name>
<sequence length="231" mass="25388">MMTTLTARPEAITFDPQQSALIVVDMQNAYATPGGYLDLAGFDVSTTRPVIANIQTAVTAARAAGMLIIWFQNGWDEQYVEAGGPGSPNFHKSNALKTMRKQPQLQGKLLAKGSWDYQLVDELVPQPGDIVLPKPRYSGFFNTPLDSILRSRGIRHLVFTGIATNVCVESTLRDGFFLEYFGVVLEDATHQAGPEFVQKAALFNIETFFGWVSDVETFCDALSPTSFARIA</sequence>
<comment type="function">
    <text evidence="1">Hydrolyzes ureidoacrylate to form aminoacrylate and carbamate. The carbamate hydrolyzes spontaneously, thereby releasing one of the nitrogen atoms of the pyrimidine ring as ammonia and one of its carbon atoms as CO2.</text>
</comment>
<comment type="catalytic activity">
    <reaction evidence="1">
        <text>(Z)-3-ureidoacrylate + H2O + H(+) = (Z)-3-aminoacrylate + NH4(+) + CO2</text>
        <dbReference type="Rhea" id="RHEA:42624"/>
        <dbReference type="ChEBI" id="CHEBI:15377"/>
        <dbReference type="ChEBI" id="CHEBI:15378"/>
        <dbReference type="ChEBI" id="CHEBI:16526"/>
        <dbReference type="ChEBI" id="CHEBI:28938"/>
        <dbReference type="ChEBI" id="CHEBI:59891"/>
        <dbReference type="ChEBI" id="CHEBI:59894"/>
        <dbReference type="EC" id="3.5.1.110"/>
    </reaction>
</comment>
<comment type="catalytic activity">
    <reaction evidence="1">
        <text>(Z)-3-ureidoacrylate + H2O = (Z)-3-aminoacrylate + carbamate + H(+)</text>
        <dbReference type="Rhea" id="RHEA:31603"/>
        <dbReference type="ChEBI" id="CHEBI:13941"/>
        <dbReference type="ChEBI" id="CHEBI:15377"/>
        <dbReference type="ChEBI" id="CHEBI:15378"/>
        <dbReference type="ChEBI" id="CHEBI:59891"/>
        <dbReference type="ChEBI" id="CHEBI:59894"/>
    </reaction>
</comment>
<comment type="catalytic activity">
    <reaction evidence="1">
        <text>(Z)-2-methylureidoacrylate + H2O + H(+) = (Z)-2-methylaminoacrylate + NH4(+) + CO2</text>
        <dbReference type="Rhea" id="RHEA:42620"/>
        <dbReference type="ChEBI" id="CHEBI:15377"/>
        <dbReference type="ChEBI" id="CHEBI:15378"/>
        <dbReference type="ChEBI" id="CHEBI:16526"/>
        <dbReference type="ChEBI" id="CHEBI:28938"/>
        <dbReference type="ChEBI" id="CHEBI:143783"/>
        <dbReference type="ChEBI" id="CHEBI:145735"/>
        <dbReference type="EC" id="3.5.1.110"/>
    </reaction>
</comment>
<comment type="induction">
    <text evidence="1">Up-regulated by the nitrogen regulatory protein C (NtrC also called GlnG) and repressed by RutR.</text>
</comment>
<comment type="similarity">
    <text evidence="1">Belongs to the isochorismatase family. RutB subfamily.</text>
</comment>
<reference key="1">
    <citation type="journal article" date="2008" name="J. Bacteriol.">
        <title>The pangenome structure of Escherichia coli: comparative genomic analysis of E. coli commensal and pathogenic isolates.</title>
        <authorList>
            <person name="Rasko D.A."/>
            <person name="Rosovitz M.J."/>
            <person name="Myers G.S.A."/>
            <person name="Mongodin E.F."/>
            <person name="Fricke W.F."/>
            <person name="Gajer P."/>
            <person name="Crabtree J."/>
            <person name="Sebaihia M."/>
            <person name="Thomson N.R."/>
            <person name="Chaudhuri R."/>
            <person name="Henderson I.R."/>
            <person name="Sperandio V."/>
            <person name="Ravel J."/>
        </authorList>
    </citation>
    <scope>NUCLEOTIDE SEQUENCE [LARGE SCALE GENOMIC DNA]</scope>
    <source>
        <strain>E24377A / ETEC</strain>
    </source>
</reference>
<accession>A7ZKB6</accession>
<evidence type="ECO:0000255" key="1">
    <source>
        <dbReference type="HAMAP-Rule" id="MF_00830"/>
    </source>
</evidence>
<keyword id="KW-0378">Hydrolase</keyword>
<keyword id="KW-1185">Reference proteome</keyword>
<feature type="chain" id="PRO_0000402670" description="Ureidoacrylate amidohydrolase RutB">
    <location>
        <begin position="1"/>
        <end position="231"/>
    </location>
</feature>
<feature type="active site" description="Proton acceptor" evidence="1">
    <location>
        <position position="25"/>
    </location>
</feature>
<feature type="active site" evidence="1">
    <location>
        <position position="134"/>
    </location>
</feature>
<feature type="active site" description="Nucleophile" evidence="1">
    <location>
        <position position="167"/>
    </location>
</feature>
<gene>
    <name evidence="1" type="primary">rutB</name>
    <name type="ordered locus">EcE24377A_1129</name>
</gene>
<protein>
    <recommendedName>
        <fullName evidence="1">Ureidoacrylate amidohydrolase RutB</fullName>
        <ecNumber evidence="1">3.5.1.110</ecNumber>
    </recommendedName>
</protein>